<gene>
    <name type="primary">FCN3</name>
    <name type="synonym">FCNH</name>
    <name type="synonym">HAKA1</name>
</gene>
<protein>
    <recommendedName>
        <fullName>Ficolin-3</fullName>
    </recommendedName>
    <alternativeName>
        <fullName>Collagen/fibrinogen domain-containing lectin 3 p35</fullName>
    </alternativeName>
    <alternativeName>
        <fullName>Collagen/fibrinogen domain-containing protein 3</fullName>
    </alternativeName>
    <alternativeName>
        <fullName>Hakata antigen</fullName>
    </alternativeName>
</protein>
<keyword id="KW-0002">3D-structure</keyword>
<keyword id="KW-0025">Alternative splicing</keyword>
<keyword id="KW-0106">Calcium</keyword>
<keyword id="KW-0176">Collagen</keyword>
<keyword id="KW-1018">Complement activation lectin pathway</keyword>
<keyword id="KW-0903">Direct protein sequencing</keyword>
<keyword id="KW-1015">Disulfide bond</keyword>
<keyword id="KW-0325">Glycoprotein</keyword>
<keyword id="KW-0379">Hydroxylation</keyword>
<keyword id="KW-0391">Immunity</keyword>
<keyword id="KW-0399">Innate immunity</keyword>
<keyword id="KW-0430">Lectin</keyword>
<keyword id="KW-0479">Metal-binding</keyword>
<keyword id="KW-1267">Proteomics identification</keyword>
<keyword id="KW-1185">Reference proteome</keyword>
<keyword id="KW-0677">Repeat</keyword>
<keyword id="KW-0964">Secreted</keyword>
<keyword id="KW-0732">Signal</keyword>
<name>FCN3_HUMAN</name>
<organism>
    <name type="scientific">Homo sapiens</name>
    <name type="common">Human</name>
    <dbReference type="NCBI Taxonomy" id="9606"/>
    <lineage>
        <taxon>Eukaryota</taxon>
        <taxon>Metazoa</taxon>
        <taxon>Chordata</taxon>
        <taxon>Craniata</taxon>
        <taxon>Vertebrata</taxon>
        <taxon>Euteleostomi</taxon>
        <taxon>Mammalia</taxon>
        <taxon>Eutheria</taxon>
        <taxon>Euarchontoglires</taxon>
        <taxon>Primates</taxon>
        <taxon>Haplorrhini</taxon>
        <taxon>Catarrhini</taxon>
        <taxon>Hominidae</taxon>
        <taxon>Homo</taxon>
    </lineage>
</organism>
<proteinExistence type="evidence at protein level"/>
<dbReference type="EMBL" id="D88587">
    <property type="protein sequence ID" value="BAA32277.1"/>
    <property type="molecule type" value="mRNA"/>
</dbReference>
<dbReference type="EMBL" id="AK075140">
    <property type="protein sequence ID" value="BAC11429.1"/>
    <property type="molecule type" value="mRNA"/>
</dbReference>
<dbReference type="EMBL" id="CR456808">
    <property type="protein sequence ID" value="CAG33089.1"/>
    <property type="molecule type" value="mRNA"/>
</dbReference>
<dbReference type="EMBL" id="AY756173">
    <property type="protein sequence ID" value="AAU85296.1"/>
    <property type="molecule type" value="Genomic_DNA"/>
</dbReference>
<dbReference type="EMBL" id="FO393419">
    <property type="status" value="NOT_ANNOTATED_CDS"/>
    <property type="molecule type" value="Genomic_DNA"/>
</dbReference>
<dbReference type="EMBL" id="BC020731">
    <property type="protein sequence ID" value="AAH20731.1"/>
    <property type="molecule type" value="mRNA"/>
</dbReference>
<dbReference type="CCDS" id="CCDS300.1">
    <molecule id="O75636-1"/>
</dbReference>
<dbReference type="CCDS" id="CCDS301.1">
    <molecule id="O75636-2"/>
</dbReference>
<dbReference type="RefSeq" id="NP_003656.2">
    <molecule id="O75636-1"/>
    <property type="nucleotide sequence ID" value="NM_003665.3"/>
</dbReference>
<dbReference type="RefSeq" id="NP_775628.1">
    <molecule id="O75636-2"/>
    <property type="nucleotide sequence ID" value="NM_173452.3"/>
</dbReference>
<dbReference type="PDB" id="2J5Z">
    <property type="method" value="X-ray"/>
    <property type="resolution" value="1.73 A"/>
    <property type="chains" value="A/B/C=79-299"/>
</dbReference>
<dbReference type="PDB" id="2J60">
    <property type="method" value="X-ray"/>
    <property type="resolution" value="1.80 A"/>
    <property type="chains" value="A/B/C=79-299"/>
</dbReference>
<dbReference type="PDB" id="2J64">
    <property type="method" value="X-ray"/>
    <property type="resolution" value="2.20 A"/>
    <property type="chains" value="A/B/C=79-299"/>
</dbReference>
<dbReference type="PDBsum" id="2J5Z"/>
<dbReference type="PDBsum" id="2J60"/>
<dbReference type="PDBsum" id="2J64"/>
<dbReference type="SMR" id="O75636"/>
<dbReference type="BioGRID" id="114117">
    <property type="interactions" value="57"/>
</dbReference>
<dbReference type="ComplexPortal" id="CPX-6179">
    <property type="entry name" value="FCN3-MASP1 lectin-protease complex"/>
</dbReference>
<dbReference type="ComplexPortal" id="CPX-6239">
    <property type="entry name" value="FCN3-MASP2 lectin-protease complex"/>
</dbReference>
<dbReference type="FunCoup" id="O75636">
    <property type="interactions" value="12"/>
</dbReference>
<dbReference type="IntAct" id="O75636">
    <property type="interactions" value="56"/>
</dbReference>
<dbReference type="STRING" id="9606.ENSP00000270879"/>
<dbReference type="DrugBank" id="DB01593">
    <property type="generic name" value="Zinc"/>
</dbReference>
<dbReference type="DrugBank" id="DB14487">
    <property type="generic name" value="Zinc acetate"/>
</dbReference>
<dbReference type="UniLectin" id="O75636"/>
<dbReference type="GlyConnect" id="1247">
    <property type="glycosylation" value="2 N-Linked glycans (1 site)"/>
</dbReference>
<dbReference type="GlyCosmos" id="O75636">
    <property type="glycosylation" value="1 site, 2 glycans"/>
</dbReference>
<dbReference type="GlyGen" id="O75636">
    <property type="glycosylation" value="1 site, 14 N-linked glycans (1 site)"/>
</dbReference>
<dbReference type="iPTMnet" id="O75636"/>
<dbReference type="PhosphoSitePlus" id="O75636"/>
<dbReference type="BioMuta" id="FCN3"/>
<dbReference type="CPTAC" id="non-CPTAC-1124"/>
<dbReference type="MassIVE" id="O75636"/>
<dbReference type="PaxDb" id="9606-ENSP00000270879"/>
<dbReference type="PeptideAtlas" id="O75636"/>
<dbReference type="ProteomicsDB" id="50132">
    <molecule id="O75636-1"/>
</dbReference>
<dbReference type="ProteomicsDB" id="50133">
    <molecule id="O75636-2"/>
</dbReference>
<dbReference type="Antibodypedia" id="30776">
    <property type="antibodies" value="258 antibodies from 27 providers"/>
</dbReference>
<dbReference type="DNASU" id="8547"/>
<dbReference type="Ensembl" id="ENST00000270879.9">
    <molecule id="O75636-1"/>
    <property type="protein sequence ID" value="ENSP00000270879.4"/>
    <property type="gene ID" value="ENSG00000142748.14"/>
</dbReference>
<dbReference type="Ensembl" id="ENST00000354982.2">
    <molecule id="O75636-2"/>
    <property type="protein sequence ID" value="ENSP00000347077.2"/>
    <property type="gene ID" value="ENSG00000142748.14"/>
</dbReference>
<dbReference type="GeneID" id="8547"/>
<dbReference type="KEGG" id="hsa:8547"/>
<dbReference type="MANE-Select" id="ENST00000270879.9">
    <property type="protein sequence ID" value="ENSP00000270879.4"/>
    <property type="RefSeq nucleotide sequence ID" value="NM_003665.4"/>
    <property type="RefSeq protein sequence ID" value="NP_003656.2"/>
</dbReference>
<dbReference type="UCSC" id="uc001boa.4">
    <molecule id="O75636-1"/>
    <property type="organism name" value="human"/>
</dbReference>
<dbReference type="AGR" id="HGNC:3625"/>
<dbReference type="CTD" id="8547"/>
<dbReference type="DisGeNET" id="8547"/>
<dbReference type="GeneCards" id="FCN3"/>
<dbReference type="HGNC" id="HGNC:3625">
    <property type="gene designation" value="FCN3"/>
</dbReference>
<dbReference type="HPA" id="ENSG00000142748">
    <property type="expression patterns" value="Group enriched (liver, lung)"/>
</dbReference>
<dbReference type="MalaCards" id="FCN3"/>
<dbReference type="MIM" id="604973">
    <property type="type" value="gene"/>
</dbReference>
<dbReference type="MIM" id="613860">
    <property type="type" value="phenotype"/>
</dbReference>
<dbReference type="neXtProt" id="NX_O75636"/>
<dbReference type="OpenTargets" id="ENSG00000142748"/>
<dbReference type="Orphanet" id="331190">
    <property type="disease" value="Immunodeficiency due to ficolin3 deficiency"/>
</dbReference>
<dbReference type="PharmGKB" id="PA28071"/>
<dbReference type="VEuPathDB" id="HostDB:ENSG00000142748"/>
<dbReference type="eggNOG" id="KOG2579">
    <property type="taxonomic scope" value="Eukaryota"/>
</dbReference>
<dbReference type="GeneTree" id="ENSGT00940000163188"/>
<dbReference type="HOGENOM" id="CLU_038628_6_0_1"/>
<dbReference type="InParanoid" id="O75636"/>
<dbReference type="OMA" id="GEADHYQ"/>
<dbReference type="OrthoDB" id="7735550at2759"/>
<dbReference type="PAN-GO" id="O75636">
    <property type="GO annotations" value="2 GO annotations based on evolutionary models"/>
</dbReference>
<dbReference type="PhylomeDB" id="O75636"/>
<dbReference type="TreeFam" id="TF351983"/>
<dbReference type="PathwayCommons" id="O75636"/>
<dbReference type="Reactome" id="R-HSA-166662">
    <property type="pathway name" value="Lectin pathway of complement activation"/>
</dbReference>
<dbReference type="Reactome" id="R-HSA-166663">
    <property type="pathway name" value="Initial triggering of complement"/>
</dbReference>
<dbReference type="Reactome" id="R-HSA-2855086">
    <property type="pathway name" value="Ficolins bind to repetitive carbohydrate structures on the target cell surface"/>
</dbReference>
<dbReference type="SignaLink" id="O75636"/>
<dbReference type="SIGNOR" id="O75636"/>
<dbReference type="BioGRID-ORCS" id="8547">
    <property type="hits" value="8 hits in 1138 CRISPR screens"/>
</dbReference>
<dbReference type="ChiTaRS" id="FCN3">
    <property type="organism name" value="human"/>
</dbReference>
<dbReference type="EvolutionaryTrace" id="O75636"/>
<dbReference type="GeneWiki" id="FCN3"/>
<dbReference type="GenomeRNAi" id="8547"/>
<dbReference type="Pharos" id="O75636">
    <property type="development level" value="Tbio"/>
</dbReference>
<dbReference type="PRO" id="PR:O75636"/>
<dbReference type="Proteomes" id="UP000005640">
    <property type="component" value="Chromosome 1"/>
</dbReference>
<dbReference type="RNAct" id="O75636">
    <property type="molecule type" value="protein"/>
</dbReference>
<dbReference type="Bgee" id="ENSG00000142748">
    <property type="expression patterns" value="Expressed in right lung and 104 other cell types or tissues"/>
</dbReference>
<dbReference type="ExpressionAtlas" id="O75636">
    <property type="expression patterns" value="baseline and differential"/>
</dbReference>
<dbReference type="GO" id="GO:0072562">
    <property type="term" value="C:blood microparticle"/>
    <property type="evidence" value="ECO:0007005"/>
    <property type="project" value="UniProtKB"/>
</dbReference>
<dbReference type="GO" id="GO:0005581">
    <property type="term" value="C:collagen trimer"/>
    <property type="evidence" value="ECO:0007669"/>
    <property type="project" value="UniProtKB-KW"/>
</dbReference>
<dbReference type="GO" id="GO:0062023">
    <property type="term" value="C:collagen-containing extracellular matrix"/>
    <property type="evidence" value="ECO:0000318"/>
    <property type="project" value="GO_Central"/>
</dbReference>
<dbReference type="GO" id="GO:0009897">
    <property type="term" value="C:external side of plasma membrane"/>
    <property type="evidence" value="ECO:0000303"/>
    <property type="project" value="ComplexPortal"/>
</dbReference>
<dbReference type="GO" id="GO:0005576">
    <property type="term" value="C:extracellular region"/>
    <property type="evidence" value="ECO:0000304"/>
    <property type="project" value="Reactome"/>
</dbReference>
<dbReference type="GO" id="GO:0005615">
    <property type="term" value="C:extracellular space"/>
    <property type="evidence" value="ECO:0000318"/>
    <property type="project" value="GO_Central"/>
</dbReference>
<dbReference type="GO" id="GO:1905370">
    <property type="term" value="C:serine-type endopeptidase complex"/>
    <property type="evidence" value="ECO:0000314"/>
    <property type="project" value="ComplexPortal"/>
</dbReference>
<dbReference type="GO" id="GO:0003823">
    <property type="term" value="F:antigen binding"/>
    <property type="evidence" value="ECO:0000314"/>
    <property type="project" value="UniProtKB"/>
</dbReference>
<dbReference type="GO" id="GO:0030246">
    <property type="term" value="F:carbohydrate binding"/>
    <property type="evidence" value="ECO:0000304"/>
    <property type="project" value="ProtInc"/>
</dbReference>
<dbReference type="GO" id="GO:0097367">
    <property type="term" value="F:carbohydrate derivative binding"/>
    <property type="evidence" value="ECO:0000318"/>
    <property type="project" value="GO_Central"/>
</dbReference>
<dbReference type="GO" id="GO:0046872">
    <property type="term" value="F:metal ion binding"/>
    <property type="evidence" value="ECO:0007669"/>
    <property type="project" value="UniProtKB-KW"/>
</dbReference>
<dbReference type="GO" id="GO:0005102">
    <property type="term" value="F:signaling receptor binding"/>
    <property type="evidence" value="ECO:0000318"/>
    <property type="project" value="GO_Central"/>
</dbReference>
<dbReference type="GO" id="GO:0002752">
    <property type="term" value="P:cell surface pattern recognition receptor signaling pathway"/>
    <property type="evidence" value="ECO:0000303"/>
    <property type="project" value="ComplexPortal"/>
</dbReference>
<dbReference type="GO" id="GO:0006956">
    <property type="term" value="P:complement activation"/>
    <property type="evidence" value="ECO:0000314"/>
    <property type="project" value="UniProtKB"/>
</dbReference>
<dbReference type="GO" id="GO:0001867">
    <property type="term" value="P:complement activation, lectin pathway"/>
    <property type="evidence" value="ECO:0000314"/>
    <property type="project" value="UniProtKB"/>
</dbReference>
<dbReference type="GO" id="GO:0051607">
    <property type="term" value="P:defense response to virus"/>
    <property type="evidence" value="ECO:0000314"/>
    <property type="project" value="UniProtKB"/>
</dbReference>
<dbReference type="GO" id="GO:0046597">
    <property type="term" value="P:host-mediated suppression of symbiont invasion"/>
    <property type="evidence" value="ECO:0000315"/>
    <property type="project" value="UniProtKB"/>
</dbReference>
<dbReference type="GO" id="GO:1902679">
    <property type="term" value="P:negative regulation of RNA biosynthetic process"/>
    <property type="evidence" value="ECO:0000314"/>
    <property type="project" value="UniProtKB"/>
</dbReference>
<dbReference type="GO" id="GO:1903028">
    <property type="term" value="P:positive regulation of opsonization"/>
    <property type="evidence" value="ECO:0000314"/>
    <property type="project" value="ComplexPortal"/>
</dbReference>
<dbReference type="GO" id="GO:0006508">
    <property type="term" value="P:proteolysis"/>
    <property type="evidence" value="ECO:0000314"/>
    <property type="project" value="ComplexPortal"/>
</dbReference>
<dbReference type="GO" id="GO:0043654">
    <property type="term" value="P:recognition of apoptotic cell"/>
    <property type="evidence" value="ECO:0000314"/>
    <property type="project" value="UniProtKB"/>
</dbReference>
<dbReference type="CDD" id="cd00087">
    <property type="entry name" value="FReD"/>
    <property type="match status" value="1"/>
</dbReference>
<dbReference type="FunFam" id="3.90.215.10:FF:000001">
    <property type="entry name" value="Tenascin isoform 1"/>
    <property type="match status" value="1"/>
</dbReference>
<dbReference type="Gene3D" id="3.90.215.10">
    <property type="entry name" value="Gamma Fibrinogen, chain A, domain 1"/>
    <property type="match status" value="1"/>
</dbReference>
<dbReference type="Gene3D" id="4.10.530.10">
    <property type="entry name" value="Gamma-fibrinogen Carboxyl Terminal Fragment, domain 2"/>
    <property type="match status" value="1"/>
</dbReference>
<dbReference type="InterPro" id="IPR036056">
    <property type="entry name" value="Fibrinogen-like_C"/>
</dbReference>
<dbReference type="InterPro" id="IPR014716">
    <property type="entry name" value="Fibrinogen_a/b/g_C_1"/>
</dbReference>
<dbReference type="InterPro" id="IPR002181">
    <property type="entry name" value="Fibrinogen_a/b/g_C_dom"/>
</dbReference>
<dbReference type="InterPro" id="IPR050373">
    <property type="entry name" value="Fibrinogen_C-term_domain"/>
</dbReference>
<dbReference type="InterPro" id="IPR020837">
    <property type="entry name" value="Fibrinogen_CS"/>
</dbReference>
<dbReference type="NCBIfam" id="NF040941">
    <property type="entry name" value="GGGWT_bact"/>
    <property type="match status" value="1"/>
</dbReference>
<dbReference type="PANTHER" id="PTHR19143">
    <property type="entry name" value="FIBRINOGEN/TENASCIN/ANGIOPOEITIN"/>
    <property type="match status" value="1"/>
</dbReference>
<dbReference type="PANTHER" id="PTHR19143:SF415">
    <property type="entry name" value="FICOLIN-3"/>
    <property type="match status" value="1"/>
</dbReference>
<dbReference type="Pfam" id="PF00147">
    <property type="entry name" value="Fibrinogen_C"/>
    <property type="match status" value="1"/>
</dbReference>
<dbReference type="SMART" id="SM00186">
    <property type="entry name" value="FBG"/>
    <property type="match status" value="1"/>
</dbReference>
<dbReference type="SUPFAM" id="SSF56496">
    <property type="entry name" value="Fibrinogen C-terminal domain-like"/>
    <property type="match status" value="1"/>
</dbReference>
<dbReference type="PROSITE" id="PS00514">
    <property type="entry name" value="FIBRINOGEN_C_1"/>
    <property type="match status" value="1"/>
</dbReference>
<dbReference type="PROSITE" id="PS51406">
    <property type="entry name" value="FIBRINOGEN_C_2"/>
    <property type="match status" value="1"/>
</dbReference>
<accession>O75636</accession>
<accession>Q6IBJ5</accession>
<accession>Q8WW86</accession>
<comment type="function">
    <text evidence="4 7">May function in innate immunity through activation of the lectin complement pathway. Calcium-dependent and GlcNAc-binding lectin. Has affinity with GalNAc, GlcNAc, D-fucose, as mono/oligosaccharide and lipopolysaccharides from S.typhimurium and S.minnesota.</text>
</comment>
<comment type="subunit">
    <text evidence="4 7">Homotrimer (PubMed:17215869). May form an octadecamer consisting of an elementary trimer unit. Does not interact with fibronectin, elastin or zymosan. Interacts with MASP1 and MASP2.</text>
</comment>
<comment type="interaction">
    <interactant intactId="EBI-11786958">
        <id>O75636</id>
    </interactant>
    <interactant intactId="EBI-2807625">
        <id>P17927</id>
        <label>CR1</label>
    </interactant>
    <organismsDiffer>false</organismsDiffer>
    <experiments>2</experiments>
</comment>
<comment type="interaction">
    <interactant intactId="EBI-11786958">
        <id>O75636</id>
    </interactant>
    <interactant intactId="EBI-7468784">
        <id>Q15485</id>
        <label>FCN2</label>
    </interactant>
    <organismsDiffer>false</organismsDiffer>
    <experiments>12</experiments>
</comment>
<comment type="interaction">
    <interactant intactId="EBI-11786958">
        <id>O75636</id>
    </interactant>
    <interactant intactId="EBI-1220319">
        <id>P02751</id>
        <label>FN1</label>
    </interactant>
    <organismsDiffer>false</organismsDiffer>
    <experiments>3</experiments>
</comment>
<comment type="interaction">
    <interactant intactId="EBI-11786958">
        <id>O75636</id>
    </interactant>
    <interactant intactId="EBI-26435098">
        <id>P48740-2</id>
        <label>MASP1</label>
    </interactant>
    <organismsDiffer>false</organismsDiffer>
    <experiments>5</experiments>
</comment>
<comment type="interaction">
    <interactant intactId="EBI-11786958">
        <id>O75636</id>
    </interactant>
    <interactant intactId="EBI-26435118">
        <id>P48740-3</id>
        <label>MASP1</label>
    </interactant>
    <organismsDiffer>false</organismsDiffer>
    <experiments>3</experiments>
</comment>
<comment type="interaction">
    <interactant intactId="EBI-11786958">
        <id>O75636</id>
    </interactant>
    <interactant intactId="EBI-26878164">
        <id>PRO_0000000214</id>
        <label>fbpA</label>
        <dbReference type="UniProtKB" id="P9WQP3"/>
    </interactant>
    <organismsDiffer>true</organismsDiffer>
    <experiments>2</experiments>
</comment>
<comment type="interaction">
    <interactant intactId="EBI-11786958">
        <id>O75636</id>
    </interactant>
    <interactant intactId="EBI-26878221">
        <id>P9WQP1</id>
        <label>fbpB</label>
    </interactant>
    <organismsDiffer>true</organismsDiffer>
    <experiments>4</experiments>
</comment>
<comment type="interaction">
    <interactant intactId="EBI-27105453">
        <id>PRO_0000009142</id>
    </interactant>
    <interactant intactId="EBI-27105453">
        <id>PRO_0000009142</id>
        <label>FCN3</label>
        <dbReference type="UniProtKB" id="O75636"/>
    </interactant>
    <organismsDiffer>false</organismsDiffer>
    <experiments>2</experiments>
</comment>
<comment type="subcellular location">
    <subcellularLocation>
        <location>Secreted</location>
    </subcellularLocation>
    <text>Found in blood plasma, bronchus, alveolus and bile duct.</text>
</comment>
<comment type="alternative products">
    <event type="alternative splicing"/>
    <isoform>
        <id>O75636-1</id>
        <name>1</name>
        <sequence type="displayed"/>
    </isoform>
    <isoform>
        <id>O75636-2</id>
        <name>2</name>
        <sequence type="described" ref="VSP_001541"/>
    </isoform>
</comment>
<comment type="tissue specificity">
    <text evidence="3">Liver and lung. In liver it is produced by bile duct epithelial cells and hepatocytes. In lung it is produced by both ciliated bronchial epithelial cells and type II alveolar epithelial cells.</text>
</comment>
<comment type="PTM">
    <text>The N-terminus is blocked.</text>
</comment>
<comment type="disease" evidence="10">
    <disease id="DI-03103">
        <name>Ficolin 3 deficiency</name>
        <acronym>FCN3D</acronym>
        <description>A disorder characterized by immunodeficiency, recurrent infections, brain abscesses and recurrent warts on the fingers. Affected individuals have normal levels of lymphocytes, normal T-cell responses, and normal antibodies, but a selective deficient antibody response to pneumococcal polysaccharide vaccine.</description>
        <dbReference type="MIM" id="613860"/>
    </disease>
    <text>The disease is caused by variants affecting the gene represented in this entry.</text>
</comment>
<comment type="similarity">
    <text evidence="14">Belongs to the ficolin lectin family.</text>
</comment>
<sequence>MDLLWILPSLWLLLLGGPACLKTQEHPSCPGPRELEASKVVLLPSCPGAPGSPGEKGAPGPQGPPGPPGKMGPKGEPGDPVNLLRCQEGPRNCRELLSQGATLSGWYHLCLPEGRALPVFCDMDTEGGGWLVFQRRQDGSVDFFRSWSSYRAGFGNQESEFWLGNENLHQLTLQGNWELRVELEDFNGNRTFAHYATFRLLGEVDHYQLALGKFSEGTAGDSLSLHSGRPFTTYDADHDSSNSNCAVIVHGAWWYASCYRSNLNGRYAVSEAAAHKYGIDWASGRGVGHPYRRVRMMLR</sequence>
<reference key="1">
    <citation type="journal article" date="1998" name="J. Biol. Chem.">
        <title>Cloning and characterization of the Hakata antigen, a member of the ficolin/opsonin p35 lectin family.</title>
        <authorList>
            <person name="Sugimoto R."/>
            <person name="Yae Y."/>
            <person name="Akaiwa M."/>
            <person name="Kitajima S."/>
            <person name="Shibata Y."/>
            <person name="Sato H."/>
            <person name="Hirata J."/>
            <person name="Okochi K."/>
            <person name="Izuhara K."/>
            <person name="Hamasaki N."/>
        </authorList>
    </citation>
    <scope>NUCLEOTIDE SEQUENCE [MRNA] (ISOFORM 1)</scope>
    <scope>PARTIAL PROTEIN SEQUENCE</scope>
    <scope>HYDROXYLATION AT PRO-50; PRO-53; PRO-59; PRO-65; PRO-68 AND PRO-77</scope>
    <source>
        <tissue>Lung</tissue>
    </source>
</reference>
<reference key="2">
    <citation type="journal article" date="2004" name="Nat. Genet.">
        <title>Complete sequencing and characterization of 21,243 full-length human cDNAs.</title>
        <authorList>
            <person name="Ota T."/>
            <person name="Suzuki Y."/>
            <person name="Nishikawa T."/>
            <person name="Otsuki T."/>
            <person name="Sugiyama T."/>
            <person name="Irie R."/>
            <person name="Wakamatsu A."/>
            <person name="Hayashi K."/>
            <person name="Sato H."/>
            <person name="Nagai K."/>
            <person name="Kimura K."/>
            <person name="Makita H."/>
            <person name="Sekine M."/>
            <person name="Obayashi M."/>
            <person name="Nishi T."/>
            <person name="Shibahara T."/>
            <person name="Tanaka T."/>
            <person name="Ishii S."/>
            <person name="Yamamoto J."/>
            <person name="Saito K."/>
            <person name="Kawai Y."/>
            <person name="Isono Y."/>
            <person name="Nakamura Y."/>
            <person name="Nagahari K."/>
            <person name="Murakami K."/>
            <person name="Yasuda T."/>
            <person name="Iwayanagi T."/>
            <person name="Wagatsuma M."/>
            <person name="Shiratori A."/>
            <person name="Sudo H."/>
            <person name="Hosoiri T."/>
            <person name="Kaku Y."/>
            <person name="Kodaira H."/>
            <person name="Kondo H."/>
            <person name="Sugawara M."/>
            <person name="Takahashi M."/>
            <person name="Kanda K."/>
            <person name="Yokoi T."/>
            <person name="Furuya T."/>
            <person name="Kikkawa E."/>
            <person name="Omura Y."/>
            <person name="Abe K."/>
            <person name="Kamihara K."/>
            <person name="Katsuta N."/>
            <person name="Sato K."/>
            <person name="Tanikawa M."/>
            <person name="Yamazaki M."/>
            <person name="Ninomiya K."/>
            <person name="Ishibashi T."/>
            <person name="Yamashita H."/>
            <person name="Murakawa K."/>
            <person name="Fujimori K."/>
            <person name="Tanai H."/>
            <person name="Kimata M."/>
            <person name="Watanabe M."/>
            <person name="Hiraoka S."/>
            <person name="Chiba Y."/>
            <person name="Ishida S."/>
            <person name="Ono Y."/>
            <person name="Takiguchi S."/>
            <person name="Watanabe S."/>
            <person name="Yosida M."/>
            <person name="Hotuta T."/>
            <person name="Kusano J."/>
            <person name="Kanehori K."/>
            <person name="Takahashi-Fujii A."/>
            <person name="Hara H."/>
            <person name="Tanase T.-O."/>
            <person name="Nomura Y."/>
            <person name="Togiya S."/>
            <person name="Komai F."/>
            <person name="Hara R."/>
            <person name="Takeuchi K."/>
            <person name="Arita M."/>
            <person name="Imose N."/>
            <person name="Musashino K."/>
            <person name="Yuuki H."/>
            <person name="Oshima A."/>
            <person name="Sasaki N."/>
            <person name="Aotsuka S."/>
            <person name="Yoshikawa Y."/>
            <person name="Matsunawa H."/>
            <person name="Ichihara T."/>
            <person name="Shiohata N."/>
            <person name="Sano S."/>
            <person name="Moriya S."/>
            <person name="Momiyama H."/>
            <person name="Satoh N."/>
            <person name="Takami S."/>
            <person name="Terashima Y."/>
            <person name="Suzuki O."/>
            <person name="Nakagawa S."/>
            <person name="Senoh A."/>
            <person name="Mizoguchi H."/>
            <person name="Goto Y."/>
            <person name="Shimizu F."/>
            <person name="Wakebe H."/>
            <person name="Hishigaki H."/>
            <person name="Watanabe T."/>
            <person name="Sugiyama A."/>
            <person name="Takemoto M."/>
            <person name="Kawakami B."/>
            <person name="Yamazaki M."/>
            <person name="Watanabe K."/>
            <person name="Kumagai A."/>
            <person name="Itakura S."/>
            <person name="Fukuzumi Y."/>
            <person name="Fujimori Y."/>
            <person name="Komiyama M."/>
            <person name="Tashiro H."/>
            <person name="Tanigami A."/>
            <person name="Fujiwara T."/>
            <person name="Ono T."/>
            <person name="Yamada K."/>
            <person name="Fujii Y."/>
            <person name="Ozaki K."/>
            <person name="Hirao M."/>
            <person name="Ohmori Y."/>
            <person name="Kawabata A."/>
            <person name="Hikiji T."/>
            <person name="Kobatake N."/>
            <person name="Inagaki H."/>
            <person name="Ikema Y."/>
            <person name="Okamoto S."/>
            <person name="Okitani R."/>
            <person name="Kawakami T."/>
            <person name="Noguchi S."/>
            <person name="Itoh T."/>
            <person name="Shigeta K."/>
            <person name="Senba T."/>
            <person name="Matsumura K."/>
            <person name="Nakajima Y."/>
            <person name="Mizuno T."/>
            <person name="Morinaga M."/>
            <person name="Sasaki M."/>
            <person name="Togashi T."/>
            <person name="Oyama M."/>
            <person name="Hata H."/>
            <person name="Watanabe M."/>
            <person name="Komatsu T."/>
            <person name="Mizushima-Sugano J."/>
            <person name="Satoh T."/>
            <person name="Shirai Y."/>
            <person name="Takahashi Y."/>
            <person name="Nakagawa K."/>
            <person name="Okumura K."/>
            <person name="Nagase T."/>
            <person name="Nomura N."/>
            <person name="Kikuchi H."/>
            <person name="Masuho Y."/>
            <person name="Yamashita R."/>
            <person name="Nakai K."/>
            <person name="Yada T."/>
            <person name="Nakamura Y."/>
            <person name="Ohara O."/>
            <person name="Isogai T."/>
            <person name="Sugano S."/>
        </authorList>
    </citation>
    <scope>NUCLEOTIDE SEQUENCE [LARGE SCALE MRNA] (ISOFORM 2)</scope>
    <source>
        <tissue>Placenta</tissue>
    </source>
</reference>
<reference key="3">
    <citation type="submission" date="2004-06" db="EMBL/GenBank/DDBJ databases">
        <title>Cloning of human full open reading frames in Gateway(TM) system entry vector (pDONR201).</title>
        <authorList>
            <person name="Ebert L."/>
            <person name="Schick M."/>
            <person name="Neubert P."/>
            <person name="Schatten R."/>
            <person name="Henze S."/>
            <person name="Korn B."/>
        </authorList>
    </citation>
    <scope>NUCLEOTIDE SEQUENCE [LARGE SCALE MRNA]</scope>
</reference>
<reference key="4">
    <citation type="submission" date="2004-09" db="EMBL/GenBank/DDBJ databases">
        <authorList>
            <consortium name="SeattleSNPs variation discovery resource"/>
        </authorList>
    </citation>
    <scope>NUCLEOTIDE SEQUENCE [GENOMIC DNA]</scope>
</reference>
<reference key="5">
    <citation type="journal article" date="2006" name="Nature">
        <title>The DNA sequence and biological annotation of human chromosome 1.</title>
        <authorList>
            <person name="Gregory S.G."/>
            <person name="Barlow K.F."/>
            <person name="McLay K.E."/>
            <person name="Kaul R."/>
            <person name="Swarbreck D."/>
            <person name="Dunham A."/>
            <person name="Scott C.E."/>
            <person name="Howe K.L."/>
            <person name="Woodfine K."/>
            <person name="Spencer C.C.A."/>
            <person name="Jones M.C."/>
            <person name="Gillson C."/>
            <person name="Searle S."/>
            <person name="Zhou Y."/>
            <person name="Kokocinski F."/>
            <person name="McDonald L."/>
            <person name="Evans R."/>
            <person name="Phillips K."/>
            <person name="Atkinson A."/>
            <person name="Cooper R."/>
            <person name="Jones C."/>
            <person name="Hall R.E."/>
            <person name="Andrews T.D."/>
            <person name="Lloyd C."/>
            <person name="Ainscough R."/>
            <person name="Almeida J.P."/>
            <person name="Ambrose K.D."/>
            <person name="Anderson F."/>
            <person name="Andrew R.W."/>
            <person name="Ashwell R.I.S."/>
            <person name="Aubin K."/>
            <person name="Babbage A.K."/>
            <person name="Bagguley C.L."/>
            <person name="Bailey J."/>
            <person name="Beasley H."/>
            <person name="Bethel G."/>
            <person name="Bird C.P."/>
            <person name="Bray-Allen S."/>
            <person name="Brown J.Y."/>
            <person name="Brown A.J."/>
            <person name="Buckley D."/>
            <person name="Burton J."/>
            <person name="Bye J."/>
            <person name="Carder C."/>
            <person name="Chapman J.C."/>
            <person name="Clark S.Y."/>
            <person name="Clarke G."/>
            <person name="Clee C."/>
            <person name="Cobley V."/>
            <person name="Collier R.E."/>
            <person name="Corby N."/>
            <person name="Coville G.J."/>
            <person name="Davies J."/>
            <person name="Deadman R."/>
            <person name="Dunn M."/>
            <person name="Earthrowl M."/>
            <person name="Ellington A.G."/>
            <person name="Errington H."/>
            <person name="Frankish A."/>
            <person name="Frankland J."/>
            <person name="French L."/>
            <person name="Garner P."/>
            <person name="Garnett J."/>
            <person name="Gay L."/>
            <person name="Ghori M.R.J."/>
            <person name="Gibson R."/>
            <person name="Gilby L.M."/>
            <person name="Gillett W."/>
            <person name="Glithero R.J."/>
            <person name="Grafham D.V."/>
            <person name="Griffiths C."/>
            <person name="Griffiths-Jones S."/>
            <person name="Grocock R."/>
            <person name="Hammond S."/>
            <person name="Harrison E.S.I."/>
            <person name="Hart E."/>
            <person name="Haugen E."/>
            <person name="Heath P.D."/>
            <person name="Holmes S."/>
            <person name="Holt K."/>
            <person name="Howden P.J."/>
            <person name="Hunt A.R."/>
            <person name="Hunt S.E."/>
            <person name="Hunter G."/>
            <person name="Isherwood J."/>
            <person name="James R."/>
            <person name="Johnson C."/>
            <person name="Johnson D."/>
            <person name="Joy A."/>
            <person name="Kay M."/>
            <person name="Kershaw J.K."/>
            <person name="Kibukawa M."/>
            <person name="Kimberley A.M."/>
            <person name="King A."/>
            <person name="Knights A.J."/>
            <person name="Lad H."/>
            <person name="Laird G."/>
            <person name="Lawlor S."/>
            <person name="Leongamornlert D.A."/>
            <person name="Lloyd D.M."/>
            <person name="Loveland J."/>
            <person name="Lovell J."/>
            <person name="Lush M.J."/>
            <person name="Lyne R."/>
            <person name="Martin S."/>
            <person name="Mashreghi-Mohammadi M."/>
            <person name="Matthews L."/>
            <person name="Matthews N.S.W."/>
            <person name="McLaren S."/>
            <person name="Milne S."/>
            <person name="Mistry S."/>
            <person name="Moore M.J.F."/>
            <person name="Nickerson T."/>
            <person name="O'Dell C.N."/>
            <person name="Oliver K."/>
            <person name="Palmeiri A."/>
            <person name="Palmer S.A."/>
            <person name="Parker A."/>
            <person name="Patel D."/>
            <person name="Pearce A.V."/>
            <person name="Peck A.I."/>
            <person name="Pelan S."/>
            <person name="Phelps K."/>
            <person name="Phillimore B.J."/>
            <person name="Plumb R."/>
            <person name="Rajan J."/>
            <person name="Raymond C."/>
            <person name="Rouse G."/>
            <person name="Saenphimmachak C."/>
            <person name="Sehra H.K."/>
            <person name="Sheridan E."/>
            <person name="Shownkeen R."/>
            <person name="Sims S."/>
            <person name="Skuce C.D."/>
            <person name="Smith M."/>
            <person name="Steward C."/>
            <person name="Subramanian S."/>
            <person name="Sycamore N."/>
            <person name="Tracey A."/>
            <person name="Tromans A."/>
            <person name="Van Helmond Z."/>
            <person name="Wall M."/>
            <person name="Wallis J.M."/>
            <person name="White S."/>
            <person name="Whitehead S.L."/>
            <person name="Wilkinson J.E."/>
            <person name="Willey D.L."/>
            <person name="Williams H."/>
            <person name="Wilming L."/>
            <person name="Wray P.W."/>
            <person name="Wu Z."/>
            <person name="Coulson A."/>
            <person name="Vaudin M."/>
            <person name="Sulston J.E."/>
            <person name="Durbin R.M."/>
            <person name="Hubbard T."/>
            <person name="Wooster R."/>
            <person name="Dunham I."/>
            <person name="Carter N.P."/>
            <person name="McVean G."/>
            <person name="Ross M.T."/>
            <person name="Harrow J."/>
            <person name="Olson M.V."/>
            <person name="Beck S."/>
            <person name="Rogers J."/>
            <person name="Bentley D.R."/>
        </authorList>
    </citation>
    <scope>NUCLEOTIDE SEQUENCE [LARGE SCALE GENOMIC DNA]</scope>
</reference>
<reference key="6">
    <citation type="journal article" date="2004" name="Genome Res.">
        <title>The status, quality, and expansion of the NIH full-length cDNA project: the Mammalian Gene Collection (MGC).</title>
        <authorList>
            <consortium name="The MGC Project Team"/>
        </authorList>
    </citation>
    <scope>NUCLEOTIDE SEQUENCE [LARGE SCALE MRNA] (ISOFORM 2)</scope>
    <source>
        <tissue>Lung</tissue>
    </source>
</reference>
<reference key="7">
    <citation type="journal article" date="2004" name="Protein Sci.">
        <title>Signal peptide prediction based on analysis of experimentally verified cleavage sites.</title>
        <authorList>
            <person name="Zhang Z."/>
            <person name="Henzel W.J."/>
        </authorList>
    </citation>
    <scope>PROTEIN SEQUENCE OF 24-38</scope>
</reference>
<reference key="8">
    <citation type="journal article" date="1999" name="J. Histochem. Cytochem.">
        <title>Hakata antigen, a new member of the ficolin/opsonin p35 family, is a novel human lectin secreted into bronchus/alveolus and bile.</title>
        <authorList>
            <person name="Akaiwa M."/>
            <person name="Yae Y."/>
            <person name="Sugimoto R."/>
            <person name="Suzuki S.O."/>
            <person name="Iwaki T."/>
            <person name="Izuhara K."/>
            <person name="Hamasaki N."/>
        </authorList>
    </citation>
    <scope>TISSUE SPECIFICITY</scope>
</reference>
<reference key="9">
    <citation type="journal article" date="2002" name="J. Immunol.">
        <title>Activation of the lectin complement pathway by H-ficolin (Hakata antigen).</title>
        <authorList>
            <person name="Matsushita M."/>
            <person name="Kuraya M."/>
            <person name="Hamasaki N."/>
            <person name="Tsujimura M."/>
            <person name="Shiraki H."/>
            <person name="Fujita T."/>
        </authorList>
    </citation>
    <scope>FUNCTION</scope>
    <scope>INTERACTION WITH MASP1 AND MASP2</scope>
</reference>
<reference key="10">
    <citation type="journal article" date="2005" name="J. Proteome Res.">
        <title>Human plasma N-glycoproteome analysis by immunoaffinity subtraction, hydrazide chemistry, and mass spectrometry.</title>
        <authorList>
            <person name="Liu T."/>
            <person name="Qian W.-J."/>
            <person name="Gritsenko M.A."/>
            <person name="Camp D.G. II"/>
            <person name="Monroe M.E."/>
            <person name="Moore R.J."/>
            <person name="Smith R.D."/>
        </authorList>
    </citation>
    <scope>GLYCOSYLATION [LARGE SCALE ANALYSIS] AT ASN-189</scope>
    <source>
        <tissue>Plasma</tissue>
    </source>
</reference>
<reference key="11">
    <citation type="journal article" date="2009" name="J. Proteome Res.">
        <title>Glycoproteomics analysis of human liver tissue by combination of multiple enzyme digestion and hydrazide chemistry.</title>
        <authorList>
            <person name="Chen R."/>
            <person name="Jiang X."/>
            <person name="Sun D."/>
            <person name="Han G."/>
            <person name="Wang F."/>
            <person name="Ye M."/>
            <person name="Wang L."/>
            <person name="Zou H."/>
        </authorList>
    </citation>
    <scope>GLYCOSYLATION [LARGE SCALE ANALYSIS] AT ASN-189</scope>
    <source>
        <tissue>Liver</tissue>
    </source>
</reference>
<reference key="12">
    <citation type="journal article" date="2009" name="Mol. Cell. Proteomics">
        <title>A strategy for precise and large scale identification of core fucosylated glycoproteins.</title>
        <authorList>
            <person name="Jia W."/>
            <person name="Lu Z."/>
            <person name="Fu Y."/>
            <person name="Wang H.P."/>
            <person name="Wang L.H."/>
            <person name="Chi H."/>
            <person name="Yuan Z.F."/>
            <person name="Zheng Z.B."/>
            <person name="Song L.N."/>
            <person name="Han H.H."/>
            <person name="Liang Y.M."/>
            <person name="Wang J.L."/>
            <person name="Cai Y."/>
            <person name="Zhang Y.K."/>
            <person name="Deng Y.L."/>
            <person name="Ying W.T."/>
            <person name="He S.M."/>
            <person name="Qian X.H."/>
        </authorList>
    </citation>
    <scope>GLYCOSYLATION AT ASN-189</scope>
</reference>
<reference key="13">
    <citation type="journal article" date="2009" name="N. Engl. J. Med.">
        <title>Immunodeficiency associated with FCN3 mutation and ficolin-3 deficiency.</title>
        <authorList>
            <person name="Munthe-Fog L."/>
            <person name="Hummelshoj T."/>
            <person name="Honore C."/>
            <person name="Madsen H.O."/>
            <person name="Permin H."/>
            <person name="Garred P."/>
        </authorList>
    </citation>
    <scope>INVOLVEMENT IN FCN3D</scope>
</reference>
<reference key="14">
    <citation type="journal article" date="2007" name="EMBO J.">
        <title>Structural insights into the innate immune recognition specificities of L- and H-ficolins.</title>
        <authorList>
            <person name="Garlatti V."/>
            <person name="Belloy N."/>
            <person name="Martin L."/>
            <person name="Lacroix M."/>
            <person name="Matsushita M."/>
            <person name="Endo Y."/>
            <person name="Fujita T."/>
            <person name="Fontecilla-Camps J.C."/>
            <person name="Arlaud G.J."/>
            <person name="Thielens N.M."/>
            <person name="Gaboriaud C."/>
        </authorList>
    </citation>
    <scope>X-RAY CRYSTALLOGRAPHY (1.73 ANGSTROMS) OF 79-299 IN COMPLEX WITH CALCIUM AND GALACTOSE</scope>
    <scope>DISULFIDE BONDS</scope>
    <scope>SUBUNIT</scope>
    <scope>FUNCTION</scope>
</reference>
<evidence type="ECO:0000255" key="1">
    <source>
        <dbReference type="PROSITE-ProRule" id="PRU00739"/>
    </source>
</evidence>
<evidence type="ECO:0000256" key="2">
    <source>
        <dbReference type="SAM" id="MobiDB-lite"/>
    </source>
</evidence>
<evidence type="ECO:0000269" key="3">
    <source>
    </source>
</evidence>
<evidence type="ECO:0000269" key="4">
    <source>
    </source>
</evidence>
<evidence type="ECO:0000269" key="5">
    <source>
    </source>
</evidence>
<evidence type="ECO:0000269" key="6">
    <source>
    </source>
</evidence>
<evidence type="ECO:0000269" key="7">
    <source>
    </source>
</evidence>
<evidence type="ECO:0000269" key="8">
    <source>
    </source>
</evidence>
<evidence type="ECO:0000269" key="9">
    <source>
    </source>
</evidence>
<evidence type="ECO:0000269" key="10">
    <source>
    </source>
</evidence>
<evidence type="ECO:0000269" key="11">
    <source>
    </source>
</evidence>
<evidence type="ECO:0000303" key="12">
    <source>
    </source>
</evidence>
<evidence type="ECO:0000303" key="13">
    <source>
    </source>
</evidence>
<evidence type="ECO:0000305" key="14"/>
<evidence type="ECO:0000305" key="15">
    <source>
    </source>
</evidence>
<evidence type="ECO:0007744" key="16">
    <source>
        <dbReference type="PDB" id="2J5Z"/>
    </source>
</evidence>
<evidence type="ECO:0007744" key="17">
    <source>
        <dbReference type="PDB" id="2J60"/>
    </source>
</evidence>
<evidence type="ECO:0007829" key="18">
    <source>
        <dbReference type="PDB" id="2J5Z"/>
    </source>
</evidence>
<evidence type="ECO:0007829" key="19">
    <source>
        <dbReference type="PDB" id="2J60"/>
    </source>
</evidence>
<feature type="signal peptide" evidence="5">
    <location>
        <begin position="1"/>
        <end position="23"/>
    </location>
</feature>
<feature type="chain" id="PRO_0000009142" description="Ficolin-3">
    <location>
        <begin position="24"/>
        <end position="299"/>
    </location>
</feature>
<feature type="domain" description="Collagen-like">
    <location>
        <begin position="48"/>
        <end position="80"/>
    </location>
</feature>
<feature type="domain" description="Fibrinogen C-terminal" evidence="1">
    <location>
        <begin position="84"/>
        <end position="299"/>
    </location>
</feature>
<feature type="region of interest" description="Disordered" evidence="2">
    <location>
        <begin position="44"/>
        <end position="81"/>
    </location>
</feature>
<feature type="compositionally biased region" description="Pro residues" evidence="2">
    <location>
        <begin position="61"/>
        <end position="70"/>
    </location>
</feature>
<feature type="binding site" evidence="7 16 17">
    <location>
        <position position="237"/>
    </location>
    <ligand>
        <name>Ca(2+)</name>
        <dbReference type="ChEBI" id="CHEBI:29108"/>
    </ligand>
</feature>
<feature type="binding site" evidence="7 16 17">
    <location>
        <position position="239"/>
    </location>
    <ligand>
        <name>Ca(2+)</name>
        <dbReference type="ChEBI" id="CHEBI:29108"/>
    </ligand>
</feature>
<feature type="binding site" evidence="7 16 17">
    <location>
        <position position="241"/>
    </location>
    <ligand>
        <name>Ca(2+)</name>
        <dbReference type="ChEBI" id="CHEBI:29108"/>
    </ligand>
</feature>
<feature type="binding site" evidence="7 16 17">
    <location>
        <position position="243"/>
    </location>
    <ligand>
        <name>Ca(2+)</name>
        <dbReference type="ChEBI" id="CHEBI:29108"/>
    </ligand>
</feature>
<feature type="binding site" evidence="15">
    <location>
        <begin position="258"/>
        <end position="259"/>
    </location>
    <ligand>
        <name>a carbohydrate</name>
        <dbReference type="ChEBI" id="CHEBI:16646"/>
    </ligand>
</feature>
<feature type="modified residue" description="Hydroxyproline" evidence="11">
    <location>
        <position position="50"/>
    </location>
</feature>
<feature type="modified residue" description="Hydroxyproline" evidence="11">
    <location>
        <position position="53"/>
    </location>
</feature>
<feature type="modified residue" description="Hydroxyproline" evidence="11">
    <location>
        <position position="59"/>
    </location>
</feature>
<feature type="modified residue" description="Hydroxyproline" evidence="11">
    <location>
        <position position="65"/>
    </location>
</feature>
<feature type="modified residue" description="Hydroxyproline" evidence="11">
    <location>
        <position position="68"/>
    </location>
</feature>
<feature type="modified residue" description="Hydroxyproline" evidence="11">
    <location>
        <position position="77"/>
    </location>
</feature>
<feature type="glycosylation site" description="N-linked (GlcNAc...) (complex) asparagine" evidence="6 8 9">
    <location>
        <position position="189"/>
    </location>
</feature>
<feature type="disulfide bond" evidence="7 16 17">
    <location>
        <begin position="86"/>
        <end position="110"/>
    </location>
</feature>
<feature type="disulfide bond" evidence="7 16 17">
    <location>
        <begin position="93"/>
        <end position="121"/>
    </location>
</feature>
<feature type="disulfide bond" evidence="7 16 17">
    <location>
        <begin position="245"/>
        <end position="258"/>
    </location>
</feature>
<feature type="splice variant" id="VSP_001541" description="In isoform 2." evidence="12 13">
    <location>
        <begin position="79"/>
        <end position="89"/>
    </location>
</feature>
<feature type="sequence conflict" description="In Ref. 1; BAA32277 and 6; AAH20731." evidence="14" ref="1 6">
    <original>E</original>
    <variation>D</variation>
    <location>
        <position position="271"/>
    </location>
</feature>
<feature type="helix" evidence="18">
    <location>
        <begin position="93"/>
        <end position="98"/>
    </location>
</feature>
<feature type="strand" evidence="18">
    <location>
        <begin position="103"/>
        <end position="110"/>
    </location>
</feature>
<feature type="strand" evidence="18">
    <location>
        <begin position="116"/>
        <end position="122"/>
    </location>
</feature>
<feature type="helix" evidence="18">
    <location>
        <begin position="125"/>
        <end position="127"/>
    </location>
</feature>
<feature type="strand" evidence="18">
    <location>
        <begin position="130"/>
        <end position="139"/>
    </location>
</feature>
<feature type="helix" evidence="18">
    <location>
        <begin position="147"/>
        <end position="152"/>
    </location>
</feature>
<feature type="strand" evidence="18">
    <location>
        <begin position="154"/>
        <end position="156"/>
    </location>
</feature>
<feature type="helix" evidence="18">
    <location>
        <begin position="165"/>
        <end position="172"/>
    </location>
</feature>
<feature type="strand" evidence="18">
    <location>
        <begin position="173"/>
        <end position="175"/>
    </location>
</feature>
<feature type="strand" evidence="18">
    <location>
        <begin position="178"/>
        <end position="184"/>
    </location>
</feature>
<feature type="strand" evidence="18">
    <location>
        <begin position="190"/>
        <end position="196"/>
    </location>
</feature>
<feature type="strand" evidence="18">
    <location>
        <begin position="198"/>
        <end position="200"/>
    </location>
</feature>
<feature type="helix" evidence="18">
    <location>
        <begin position="203"/>
        <end position="205"/>
    </location>
</feature>
<feature type="strand" evidence="18">
    <location>
        <begin position="209"/>
        <end position="211"/>
    </location>
</feature>
<feature type="strand" evidence="19">
    <location>
        <begin position="214"/>
        <end position="216"/>
    </location>
</feature>
<feature type="helix" evidence="18">
    <location>
        <begin position="224"/>
        <end position="226"/>
    </location>
</feature>
<feature type="strand" evidence="18">
    <location>
        <begin position="239"/>
        <end position="243"/>
    </location>
</feature>
<feature type="helix" evidence="18">
    <location>
        <begin position="245"/>
        <end position="249"/>
    </location>
</feature>
<feature type="strand" evidence="18">
    <location>
        <begin position="256"/>
        <end position="258"/>
    </location>
</feature>
<feature type="strand" evidence="18">
    <location>
        <begin position="269"/>
        <end position="271"/>
    </location>
</feature>
<feature type="turn" evidence="18">
    <location>
        <begin position="282"/>
        <end position="285"/>
    </location>
</feature>
<feature type="strand" evidence="18">
    <location>
        <begin position="292"/>
        <end position="299"/>
    </location>
</feature>